<keyword id="KW-0193">Cuticle</keyword>
<keyword id="KW-0903">Direct protein sequencing</keyword>
<keyword id="KW-1185">Reference proteome</keyword>
<keyword id="KW-0732">Signal</keyword>
<evidence type="ECO:0000255" key="1">
    <source>
        <dbReference type="PROSITE-ProRule" id="PRU00497"/>
    </source>
</evidence>
<evidence type="ECO:0000269" key="2">
    <source>
    </source>
</evidence>
<evidence type="ECO:0000269" key="3">
    <source ref="4"/>
</evidence>
<evidence type="ECO:0000305" key="4"/>
<evidence type="ECO:0000312" key="5">
    <source>
        <dbReference type="EMBL" id="AAL48636.1"/>
    </source>
</evidence>
<sequence length="117" mass="12680">MKFFIAFACLLAVALANEDANVLRAEQQVNVDGFAYAVELDNSVNVQQKGDLNGEEWVVKGSQSWTSPENVPVSIQYIADANGYQVVSANPPLPTPPPIPEAIQRSLEYIAAHPPSQ</sequence>
<dbReference type="EMBL" id="AE013599">
    <property type="protein sequence ID" value="AAF58686.1"/>
    <property type="molecule type" value="Genomic_DNA"/>
</dbReference>
<dbReference type="EMBL" id="AY071014">
    <property type="protein sequence ID" value="AAL48636.1"/>
    <property type="molecule type" value="mRNA"/>
</dbReference>
<dbReference type="RefSeq" id="NP_610661.1">
    <property type="nucleotide sequence ID" value="NM_136817.4"/>
</dbReference>
<dbReference type="BioGRID" id="61992">
    <property type="interactions" value="3"/>
</dbReference>
<dbReference type="FunCoup" id="Q7JZV0">
    <property type="interactions" value="64"/>
</dbReference>
<dbReference type="IntAct" id="Q7JZV0">
    <property type="interactions" value="1"/>
</dbReference>
<dbReference type="STRING" id="7227.FBpp0087279"/>
<dbReference type="GlyGen" id="Q7JZV0">
    <property type="glycosylation" value="1 site"/>
</dbReference>
<dbReference type="PaxDb" id="7227-FBpp0087279"/>
<dbReference type="DNASU" id="36196"/>
<dbReference type="EnsemblMetazoa" id="FBtr0088183">
    <property type="protein sequence ID" value="FBpp0087279"/>
    <property type="gene ID" value="FBgn0086519"/>
</dbReference>
<dbReference type="GeneID" id="36196"/>
<dbReference type="KEGG" id="dme:Dmel_CG9070"/>
<dbReference type="AGR" id="FB:FBgn0086519"/>
<dbReference type="CTD" id="36196"/>
<dbReference type="FlyBase" id="FBgn0086519">
    <property type="gene designation" value="Cpr47Eg"/>
</dbReference>
<dbReference type="VEuPathDB" id="VectorBase:FBgn0086519"/>
<dbReference type="eggNOG" id="ENOG502T7XA">
    <property type="taxonomic scope" value="Eukaryota"/>
</dbReference>
<dbReference type="GeneTree" id="ENSGT00940000166531"/>
<dbReference type="HOGENOM" id="CLU_065450_3_1_1"/>
<dbReference type="InParanoid" id="Q7JZV0"/>
<dbReference type="OMA" id="QAWKSPE"/>
<dbReference type="OrthoDB" id="6372059at2759"/>
<dbReference type="PhylomeDB" id="Q7JZV0"/>
<dbReference type="BioGRID-ORCS" id="36196">
    <property type="hits" value="0 hits in 1 CRISPR screen"/>
</dbReference>
<dbReference type="GenomeRNAi" id="36196"/>
<dbReference type="PRO" id="PR:Q7JZV0"/>
<dbReference type="Proteomes" id="UP000000803">
    <property type="component" value="Chromosome 2R"/>
</dbReference>
<dbReference type="Bgee" id="FBgn0086519">
    <property type="expression patterns" value="Expressed in larva and 11 other cell types or tissues"/>
</dbReference>
<dbReference type="ExpressionAtlas" id="Q7JZV0">
    <property type="expression patterns" value="baseline and differential"/>
</dbReference>
<dbReference type="GO" id="GO:0062129">
    <property type="term" value="C:chitin-based extracellular matrix"/>
    <property type="evidence" value="ECO:0000255"/>
    <property type="project" value="FlyBase"/>
</dbReference>
<dbReference type="GO" id="GO:0008010">
    <property type="term" value="F:structural constituent of chitin-based larval cuticle"/>
    <property type="evidence" value="ECO:0000255"/>
    <property type="project" value="FlyBase"/>
</dbReference>
<dbReference type="GO" id="GO:0040003">
    <property type="term" value="P:chitin-based cuticle development"/>
    <property type="evidence" value="ECO:0000255"/>
    <property type="project" value="FlyBase"/>
</dbReference>
<dbReference type="InterPro" id="IPR031305">
    <property type="entry name" value="Casein_CS"/>
</dbReference>
<dbReference type="InterPro" id="IPR050468">
    <property type="entry name" value="Cuticle_Struct_Prot"/>
</dbReference>
<dbReference type="InterPro" id="IPR000618">
    <property type="entry name" value="Insect_cuticle"/>
</dbReference>
<dbReference type="PANTHER" id="PTHR10380">
    <property type="entry name" value="CUTICLE PROTEIN"/>
    <property type="match status" value="1"/>
</dbReference>
<dbReference type="PANTHER" id="PTHR10380:SF241">
    <property type="entry name" value="CUTICULAR PROTEIN 47EG-RELATED"/>
    <property type="match status" value="1"/>
</dbReference>
<dbReference type="Pfam" id="PF00379">
    <property type="entry name" value="Chitin_bind_4"/>
    <property type="match status" value="1"/>
</dbReference>
<dbReference type="PROSITE" id="PS51155">
    <property type="entry name" value="CHIT_BIND_RR_2"/>
    <property type="match status" value="1"/>
</dbReference>
<feature type="signal peptide" evidence="3">
    <location>
        <begin position="1"/>
        <end position="16"/>
    </location>
</feature>
<feature type="chain" id="PRO_0000260042" description="Cuticular protein 47Eg">
    <location>
        <begin position="17"/>
        <end position="117"/>
    </location>
</feature>
<feature type="domain" description="Chitin-binding type R&amp;R" evidence="1">
    <location>
        <begin position="31"/>
        <end position="97"/>
    </location>
</feature>
<feature type="sequence conflict" description="In Ref. 4; AA sequence." evidence="4" ref="4">
    <original>E</original>
    <variation>V</variation>
    <location>
        <position position="18"/>
    </location>
</feature>
<comment type="function">
    <text evidence="3">Component of the larval cuticle.</text>
</comment>
<accession>Q7JZV0</accession>
<accession>P82383</accession>
<reference key="1">
    <citation type="journal article" date="2000" name="Science">
        <title>The genome sequence of Drosophila melanogaster.</title>
        <authorList>
            <person name="Adams M.D."/>
            <person name="Celniker S.E."/>
            <person name="Holt R.A."/>
            <person name="Evans C.A."/>
            <person name="Gocayne J.D."/>
            <person name="Amanatides P.G."/>
            <person name="Scherer S.E."/>
            <person name="Li P.W."/>
            <person name="Hoskins R.A."/>
            <person name="Galle R.F."/>
            <person name="George R.A."/>
            <person name="Lewis S.E."/>
            <person name="Richards S."/>
            <person name="Ashburner M."/>
            <person name="Henderson S.N."/>
            <person name="Sutton G.G."/>
            <person name="Wortman J.R."/>
            <person name="Yandell M.D."/>
            <person name="Zhang Q."/>
            <person name="Chen L.X."/>
            <person name="Brandon R.C."/>
            <person name="Rogers Y.-H.C."/>
            <person name="Blazej R.G."/>
            <person name="Champe M."/>
            <person name="Pfeiffer B.D."/>
            <person name="Wan K.H."/>
            <person name="Doyle C."/>
            <person name="Baxter E.G."/>
            <person name="Helt G."/>
            <person name="Nelson C.R."/>
            <person name="Miklos G.L.G."/>
            <person name="Abril J.F."/>
            <person name="Agbayani A."/>
            <person name="An H.-J."/>
            <person name="Andrews-Pfannkoch C."/>
            <person name="Baldwin D."/>
            <person name="Ballew R.M."/>
            <person name="Basu A."/>
            <person name="Baxendale J."/>
            <person name="Bayraktaroglu L."/>
            <person name="Beasley E.M."/>
            <person name="Beeson K.Y."/>
            <person name="Benos P.V."/>
            <person name="Berman B.P."/>
            <person name="Bhandari D."/>
            <person name="Bolshakov S."/>
            <person name="Borkova D."/>
            <person name="Botchan M.R."/>
            <person name="Bouck J."/>
            <person name="Brokstein P."/>
            <person name="Brottier P."/>
            <person name="Burtis K.C."/>
            <person name="Busam D.A."/>
            <person name="Butler H."/>
            <person name="Cadieu E."/>
            <person name="Center A."/>
            <person name="Chandra I."/>
            <person name="Cherry J.M."/>
            <person name="Cawley S."/>
            <person name="Dahlke C."/>
            <person name="Davenport L.B."/>
            <person name="Davies P."/>
            <person name="de Pablos B."/>
            <person name="Delcher A."/>
            <person name="Deng Z."/>
            <person name="Mays A.D."/>
            <person name="Dew I."/>
            <person name="Dietz S.M."/>
            <person name="Dodson K."/>
            <person name="Doup L.E."/>
            <person name="Downes M."/>
            <person name="Dugan-Rocha S."/>
            <person name="Dunkov B.C."/>
            <person name="Dunn P."/>
            <person name="Durbin K.J."/>
            <person name="Evangelista C.C."/>
            <person name="Ferraz C."/>
            <person name="Ferriera S."/>
            <person name="Fleischmann W."/>
            <person name="Fosler C."/>
            <person name="Gabrielian A.E."/>
            <person name="Garg N.S."/>
            <person name="Gelbart W.M."/>
            <person name="Glasser K."/>
            <person name="Glodek A."/>
            <person name="Gong F."/>
            <person name="Gorrell J.H."/>
            <person name="Gu Z."/>
            <person name="Guan P."/>
            <person name="Harris M."/>
            <person name="Harris N.L."/>
            <person name="Harvey D.A."/>
            <person name="Heiman T.J."/>
            <person name="Hernandez J.R."/>
            <person name="Houck J."/>
            <person name="Hostin D."/>
            <person name="Houston K.A."/>
            <person name="Howland T.J."/>
            <person name="Wei M.-H."/>
            <person name="Ibegwam C."/>
            <person name="Jalali M."/>
            <person name="Kalush F."/>
            <person name="Karpen G.H."/>
            <person name="Ke Z."/>
            <person name="Kennison J.A."/>
            <person name="Ketchum K.A."/>
            <person name="Kimmel B.E."/>
            <person name="Kodira C.D."/>
            <person name="Kraft C.L."/>
            <person name="Kravitz S."/>
            <person name="Kulp D."/>
            <person name="Lai Z."/>
            <person name="Lasko P."/>
            <person name="Lei Y."/>
            <person name="Levitsky A.A."/>
            <person name="Li J.H."/>
            <person name="Li Z."/>
            <person name="Liang Y."/>
            <person name="Lin X."/>
            <person name="Liu X."/>
            <person name="Mattei B."/>
            <person name="McIntosh T.C."/>
            <person name="McLeod M.P."/>
            <person name="McPherson D."/>
            <person name="Merkulov G."/>
            <person name="Milshina N.V."/>
            <person name="Mobarry C."/>
            <person name="Morris J."/>
            <person name="Moshrefi A."/>
            <person name="Mount S.M."/>
            <person name="Moy M."/>
            <person name="Murphy B."/>
            <person name="Murphy L."/>
            <person name="Muzny D.M."/>
            <person name="Nelson D.L."/>
            <person name="Nelson D.R."/>
            <person name="Nelson K.A."/>
            <person name="Nixon K."/>
            <person name="Nusskern D.R."/>
            <person name="Pacleb J.M."/>
            <person name="Palazzolo M."/>
            <person name="Pittman G.S."/>
            <person name="Pan S."/>
            <person name="Pollard J."/>
            <person name="Puri V."/>
            <person name="Reese M.G."/>
            <person name="Reinert K."/>
            <person name="Remington K."/>
            <person name="Saunders R.D.C."/>
            <person name="Scheeler F."/>
            <person name="Shen H."/>
            <person name="Shue B.C."/>
            <person name="Siden-Kiamos I."/>
            <person name="Simpson M."/>
            <person name="Skupski M.P."/>
            <person name="Smith T.J."/>
            <person name="Spier E."/>
            <person name="Spradling A.C."/>
            <person name="Stapleton M."/>
            <person name="Strong R."/>
            <person name="Sun E."/>
            <person name="Svirskas R."/>
            <person name="Tector C."/>
            <person name="Turner R."/>
            <person name="Venter E."/>
            <person name="Wang A.H."/>
            <person name="Wang X."/>
            <person name="Wang Z.-Y."/>
            <person name="Wassarman D.A."/>
            <person name="Weinstock G.M."/>
            <person name="Weissenbach J."/>
            <person name="Williams S.M."/>
            <person name="Woodage T."/>
            <person name="Worley K.C."/>
            <person name="Wu D."/>
            <person name="Yang S."/>
            <person name="Yao Q.A."/>
            <person name="Ye J."/>
            <person name="Yeh R.-F."/>
            <person name="Zaveri J.S."/>
            <person name="Zhan M."/>
            <person name="Zhang G."/>
            <person name="Zhao Q."/>
            <person name="Zheng L."/>
            <person name="Zheng X.H."/>
            <person name="Zhong F.N."/>
            <person name="Zhong W."/>
            <person name="Zhou X."/>
            <person name="Zhu S.C."/>
            <person name="Zhu X."/>
            <person name="Smith H.O."/>
            <person name="Gibbs R.A."/>
            <person name="Myers E.W."/>
            <person name="Rubin G.M."/>
            <person name="Venter J.C."/>
        </authorList>
    </citation>
    <scope>NUCLEOTIDE SEQUENCE [LARGE SCALE GENOMIC DNA]</scope>
    <source>
        <strain>Berkeley</strain>
    </source>
</reference>
<reference key="2">
    <citation type="journal article" date="2002" name="Genome Biol.">
        <title>Annotation of the Drosophila melanogaster euchromatic genome: a systematic review.</title>
        <authorList>
            <person name="Misra S."/>
            <person name="Crosby M.A."/>
            <person name="Mungall C.J."/>
            <person name="Matthews B.B."/>
            <person name="Campbell K.S."/>
            <person name="Hradecky P."/>
            <person name="Huang Y."/>
            <person name="Kaminker J.S."/>
            <person name="Millburn G.H."/>
            <person name="Prochnik S.E."/>
            <person name="Smith C.D."/>
            <person name="Tupy J.L."/>
            <person name="Whitfield E.J."/>
            <person name="Bayraktaroglu L."/>
            <person name="Berman B.P."/>
            <person name="Bettencourt B.R."/>
            <person name="Celniker S.E."/>
            <person name="de Grey A.D.N.J."/>
            <person name="Drysdale R.A."/>
            <person name="Harris N.L."/>
            <person name="Richter J."/>
            <person name="Russo S."/>
            <person name="Schroeder A.J."/>
            <person name="Shu S.Q."/>
            <person name="Stapleton M."/>
            <person name="Yamada C."/>
            <person name="Ashburner M."/>
            <person name="Gelbart W.M."/>
            <person name="Rubin G.M."/>
            <person name="Lewis S.E."/>
        </authorList>
    </citation>
    <scope>GENOME REANNOTATION</scope>
    <source>
        <strain>Berkeley</strain>
    </source>
</reference>
<reference evidence="5" key="3">
    <citation type="journal article" date="2002" name="Genome Biol.">
        <title>A Drosophila full-length cDNA resource.</title>
        <authorList>
            <person name="Stapleton M."/>
            <person name="Carlson J.W."/>
            <person name="Brokstein P."/>
            <person name="Yu C."/>
            <person name="Champe M."/>
            <person name="George R.A."/>
            <person name="Guarin H."/>
            <person name="Kronmiller B."/>
            <person name="Pacleb J.M."/>
            <person name="Park S."/>
            <person name="Wan K.H."/>
            <person name="Rubin G.M."/>
            <person name="Celniker S.E."/>
        </authorList>
    </citation>
    <scope>NUCLEOTIDE SEQUENCE [LARGE SCALE MRNA]</scope>
    <source>
        <strain evidence="5">Berkeley</strain>
        <tissue evidence="2">Embryo</tissue>
    </source>
</reference>
<reference evidence="4" key="4">
    <citation type="submission" date="2000-05" db="UniProtKB">
        <title>Third instar cuticle proteins.</title>
        <authorList>
            <person name="Chihara C.J."/>
        </authorList>
    </citation>
    <scope>PROTEIN SEQUENCE OF 17-26</scope>
    <scope>FUNCTION</scope>
    <source>
        <strain evidence="3">Oregon-R</strain>
        <tissue evidence="3">Larva</tissue>
    </source>
</reference>
<proteinExistence type="evidence at protein level"/>
<name>LCP2A_DROME</name>
<protein>
    <recommendedName>
        <fullName>Cuticular protein 47Eg</fullName>
    </recommendedName>
    <alternativeName>
        <fullName>Larval cuticle protein 2A</fullName>
    </alternativeName>
</protein>
<gene>
    <name type="primary">Cpr47Eg</name>
    <name type="synonym">Lcp2a</name>
    <name type="ORF">CG9070</name>
</gene>
<organism>
    <name type="scientific">Drosophila melanogaster</name>
    <name type="common">Fruit fly</name>
    <dbReference type="NCBI Taxonomy" id="7227"/>
    <lineage>
        <taxon>Eukaryota</taxon>
        <taxon>Metazoa</taxon>
        <taxon>Ecdysozoa</taxon>
        <taxon>Arthropoda</taxon>
        <taxon>Hexapoda</taxon>
        <taxon>Insecta</taxon>
        <taxon>Pterygota</taxon>
        <taxon>Neoptera</taxon>
        <taxon>Endopterygota</taxon>
        <taxon>Diptera</taxon>
        <taxon>Brachycera</taxon>
        <taxon>Muscomorpha</taxon>
        <taxon>Ephydroidea</taxon>
        <taxon>Drosophilidae</taxon>
        <taxon>Drosophila</taxon>
        <taxon>Sophophora</taxon>
    </lineage>
</organism>